<reference key="1">
    <citation type="journal article" date="1997" name="J. Cell Biol.">
        <title>Mdm12p, a component required for mitochondrial inheritance that is conserved between budding and fission yeast.</title>
        <authorList>
            <person name="Berger K.H."/>
            <person name="Sogo L.F."/>
            <person name="Yaffe M.P."/>
        </authorList>
    </citation>
    <scope>NUCLEOTIDE SEQUENCE [GENOMIC DNA]</scope>
    <scope>SUBCELLULAR LOCATION</scope>
</reference>
<reference key="2">
    <citation type="journal article" date="1997" name="Nature">
        <title>The nucleotide sequence of Saccharomyces cerevisiae chromosome XV.</title>
        <authorList>
            <person name="Dujon B."/>
            <person name="Albermann K."/>
            <person name="Aldea M."/>
            <person name="Alexandraki D."/>
            <person name="Ansorge W."/>
            <person name="Arino J."/>
            <person name="Benes V."/>
            <person name="Bohn C."/>
            <person name="Bolotin-Fukuhara M."/>
            <person name="Bordonne R."/>
            <person name="Boyer J."/>
            <person name="Camasses A."/>
            <person name="Casamayor A."/>
            <person name="Casas C."/>
            <person name="Cheret G."/>
            <person name="Cziepluch C."/>
            <person name="Daignan-Fornier B."/>
            <person name="Dang V.-D."/>
            <person name="de Haan M."/>
            <person name="Delius H."/>
            <person name="Durand P."/>
            <person name="Fairhead C."/>
            <person name="Feldmann H."/>
            <person name="Gaillon L."/>
            <person name="Galisson F."/>
            <person name="Gamo F.-J."/>
            <person name="Gancedo C."/>
            <person name="Goffeau A."/>
            <person name="Goulding S.E."/>
            <person name="Grivell L.A."/>
            <person name="Habbig B."/>
            <person name="Hand N.J."/>
            <person name="Hani J."/>
            <person name="Hattenhorst U."/>
            <person name="Hebling U."/>
            <person name="Hernando Y."/>
            <person name="Herrero E."/>
            <person name="Heumann K."/>
            <person name="Hiesel R."/>
            <person name="Hilger F."/>
            <person name="Hofmann B."/>
            <person name="Hollenberg C.P."/>
            <person name="Hughes B."/>
            <person name="Jauniaux J.-C."/>
            <person name="Kalogeropoulos A."/>
            <person name="Katsoulou C."/>
            <person name="Kordes E."/>
            <person name="Lafuente M.J."/>
            <person name="Landt O."/>
            <person name="Louis E.J."/>
            <person name="Maarse A.C."/>
            <person name="Madania A."/>
            <person name="Mannhaupt G."/>
            <person name="Marck C."/>
            <person name="Martin R.P."/>
            <person name="Mewes H.-W."/>
            <person name="Michaux G."/>
            <person name="Paces V."/>
            <person name="Parle-McDermott A.G."/>
            <person name="Pearson B.M."/>
            <person name="Perrin A."/>
            <person name="Pettersson B."/>
            <person name="Poch O."/>
            <person name="Pohl T.M."/>
            <person name="Poirey R."/>
            <person name="Portetelle D."/>
            <person name="Pujol A."/>
            <person name="Purnelle B."/>
            <person name="Ramezani Rad M."/>
            <person name="Rechmann S."/>
            <person name="Schwager C."/>
            <person name="Schweizer M."/>
            <person name="Sor F."/>
            <person name="Sterky F."/>
            <person name="Tarassov I.A."/>
            <person name="Teodoru C."/>
            <person name="Tettelin H."/>
            <person name="Thierry A."/>
            <person name="Tobiasch E."/>
            <person name="Tzermia M."/>
            <person name="Uhlen M."/>
            <person name="Unseld M."/>
            <person name="Valens M."/>
            <person name="Vandenbol M."/>
            <person name="Vetter I."/>
            <person name="Vlcek C."/>
            <person name="Voet M."/>
            <person name="Volckaert G."/>
            <person name="Voss H."/>
            <person name="Wambutt R."/>
            <person name="Wedler H."/>
            <person name="Wiemann S."/>
            <person name="Winsor B."/>
            <person name="Wolfe K.H."/>
            <person name="Zollner A."/>
            <person name="Zumstein E."/>
            <person name="Kleine K."/>
        </authorList>
    </citation>
    <scope>NUCLEOTIDE SEQUENCE [LARGE SCALE GENOMIC DNA]</scope>
    <source>
        <strain>ATCC 204508 / S288c</strain>
    </source>
</reference>
<reference key="3">
    <citation type="journal article" date="2014" name="G3 (Bethesda)">
        <title>The reference genome sequence of Saccharomyces cerevisiae: Then and now.</title>
        <authorList>
            <person name="Engel S.R."/>
            <person name="Dietrich F.S."/>
            <person name="Fisk D.G."/>
            <person name="Binkley G."/>
            <person name="Balakrishnan R."/>
            <person name="Costanzo M.C."/>
            <person name="Dwight S.S."/>
            <person name="Hitz B.C."/>
            <person name="Karra K."/>
            <person name="Nash R.S."/>
            <person name="Weng S."/>
            <person name="Wong E.D."/>
            <person name="Lloyd P."/>
            <person name="Skrzypek M.S."/>
            <person name="Miyasato S.R."/>
            <person name="Simison M."/>
            <person name="Cherry J.M."/>
        </authorList>
    </citation>
    <scope>GENOME REANNOTATION</scope>
    <source>
        <strain>ATCC 204508 / S288c</strain>
    </source>
</reference>
<reference key="4">
    <citation type="journal article" date="2007" name="Genome Res.">
        <title>Approaching a complete repository of sequence-verified protein-encoding clones for Saccharomyces cerevisiae.</title>
        <authorList>
            <person name="Hu Y."/>
            <person name="Rolfs A."/>
            <person name="Bhullar B."/>
            <person name="Murthy T.V.S."/>
            <person name="Zhu C."/>
            <person name="Berger M.F."/>
            <person name="Camargo A.A."/>
            <person name="Kelley F."/>
            <person name="McCarron S."/>
            <person name="Jepson D."/>
            <person name="Richardson A."/>
            <person name="Raphael J."/>
            <person name="Moreira D."/>
            <person name="Taycher E."/>
            <person name="Zuo D."/>
            <person name="Mohr S."/>
            <person name="Kane M.F."/>
            <person name="Williamson J."/>
            <person name="Simpson A.J.G."/>
            <person name="Bulyk M.L."/>
            <person name="Harlow E."/>
            <person name="Marsischky G."/>
            <person name="Kolodner R.D."/>
            <person name="LaBaer J."/>
        </authorList>
    </citation>
    <scope>NUCLEOTIDE SEQUENCE [GENOMIC DNA]</scope>
    <source>
        <strain>ATCC 204508 / S288c</strain>
    </source>
</reference>
<reference key="5">
    <citation type="journal article" date="2003" name="Mol. Biol. Cell">
        <title>A protein complex containing Mdm10p, Mdm12p, and Mmm1p links mitochondrial membranes and DNA to the cytoskeleton-based segregation machinery.</title>
        <authorList>
            <person name="Boldogh I.R."/>
            <person name="Nowakowski D.W."/>
            <person name="Yang H.-C."/>
            <person name="Chung H."/>
            <person name="Karmon S."/>
            <person name="Royes P."/>
            <person name="Pon L.A."/>
        </authorList>
    </citation>
    <scope>IDENTIFICATION IN THE MDM10/MDM12/MMM1 COMPLEX</scope>
    <scope>SUBCELLULAR LOCATION</scope>
</reference>
<reference key="6">
    <citation type="journal article" date="2003" name="Nature">
        <title>Global analysis of protein expression in yeast.</title>
        <authorList>
            <person name="Ghaemmaghami S."/>
            <person name="Huh W.-K."/>
            <person name="Bower K."/>
            <person name="Howson R.W."/>
            <person name="Belle A."/>
            <person name="Dephoure N."/>
            <person name="O'Shea E.K."/>
            <person name="Weissman J.S."/>
        </authorList>
    </citation>
    <scope>LEVEL OF PROTEIN EXPRESSION [LARGE SCALE ANALYSIS]</scope>
</reference>
<reference key="7">
    <citation type="journal article" date="2003" name="Proc. Natl. Acad. Sci. U.S.A.">
        <title>The proteome of Saccharomyces cerevisiae mitochondria.</title>
        <authorList>
            <person name="Sickmann A."/>
            <person name="Reinders J."/>
            <person name="Wagner Y."/>
            <person name="Joppich C."/>
            <person name="Zahedi R.P."/>
            <person name="Meyer H.E."/>
            <person name="Schoenfisch B."/>
            <person name="Perschil I."/>
            <person name="Chacinska A."/>
            <person name="Guiard B."/>
            <person name="Rehling P."/>
            <person name="Pfanner N."/>
            <person name="Meisinger C."/>
        </authorList>
    </citation>
    <scope>SUBCELLULAR LOCATION [LARGE SCALE ANALYSIS]</scope>
    <source>
        <strain>ATCC 76625 / YPH499</strain>
    </source>
</reference>
<reference key="8">
    <citation type="journal article" date="2007" name="EMBO J.">
        <title>The morphology proteins Mdm12/Mmm1 function in the major beta-barrel assembly pathway of mitochondria.</title>
        <authorList>
            <person name="Meisinger C."/>
            <person name="Pfannschmidt S."/>
            <person name="Rissler M."/>
            <person name="Milenkovic D."/>
            <person name="Becker T."/>
            <person name="Stojanovski D."/>
            <person name="Youngman M.J."/>
            <person name="Jensen R.E."/>
            <person name="Chacinska A."/>
            <person name="Guiard B."/>
            <person name="Pfanner N."/>
            <person name="Wiedemann N."/>
        </authorList>
    </citation>
    <scope>FUNCTION</scope>
    <scope>IDENTIFICATION IN MDM12/MMM1 AND MDM10/MDM12/MMM1 COMPLEXES</scope>
</reference>
<reference key="9">
    <citation type="journal article" date="2007" name="J. Cell Biol.">
        <title>Puf3p, a Pumilio family RNA binding protein, localizes to mitochondria and regulates mitochondrial biogenesis and motility in budding yeast.</title>
        <authorList>
            <person name="Garcia-Rodriguez L.J."/>
            <person name="Gay A.C."/>
            <person name="Pon L.A."/>
        </authorList>
    </citation>
    <scope>INTERACTION WITH PUF3</scope>
</reference>
<reference key="10">
    <citation type="journal article" date="2009" name="Science">
        <title>An ER-mitochondria tethering complex revealed by a synthetic biology screen.</title>
        <authorList>
            <person name="Kornmann B."/>
            <person name="Currie E."/>
            <person name="Collins S.R."/>
            <person name="Schuldiner M."/>
            <person name="Nunnari J."/>
            <person name="Weissman J.S."/>
            <person name="Walter P."/>
        </authorList>
    </citation>
    <scope>FUNCTION</scope>
    <scope>IDENTIFICATION IN ERMES/MDM COMPLEX</scope>
    <scope>SUBCELLULAR LOCATION</scope>
</reference>
<reference key="11">
    <citation type="journal article" date="2012" name="J. Cell Sci.">
        <title>A conserved membrane-binding domain targets proteins to organelle contact sites.</title>
        <authorList>
            <person name="Toulmay A."/>
            <person name="Prinz W.A."/>
        </authorList>
    </citation>
    <scope>FUNCTION</scope>
    <scope>DOMAIN</scope>
    <scope>MUTAGENESIS OF GLU-11; SER-12; LEU-16; ASN-17; LEU-19; ILE-20; LYS-22 AND PRO-259</scope>
</reference>
<reference key="12">
    <citation type="journal article" date="2012" name="Proteomics">
        <title>Sites of ubiquitin attachment in Saccharomyces cerevisiae.</title>
        <authorList>
            <person name="Starita L.M."/>
            <person name="Lo R.S."/>
            <person name="Eng J.K."/>
            <person name="von Haller P.D."/>
            <person name="Fields S."/>
        </authorList>
    </citation>
    <scope>UBIQUITINATION [LARGE SCALE ANALYSIS] AT LYS-49</scope>
    <scope>IDENTIFICATION BY MASS SPECTROMETRY [LARGE SCALE ANALYSIS]</scope>
</reference>
<reference key="13">
    <citation type="journal article" date="2016" name="Sci. Rep.">
        <title>A phospholipid transfer function of ER-mitochondria encounter structure revealed in vitro.</title>
        <authorList>
            <person name="Kojima R."/>
            <person name="Endo T."/>
            <person name="Tamura Y."/>
        </authorList>
    </citation>
    <scope>FUNCTION</scope>
</reference>
<reference key="14">
    <citation type="journal article" date="2016" name="EMBO Rep.">
        <title>Crystal structure of Mdm12 reveals the architecture and dynamic organization of the ERMES complex.</title>
        <authorList>
            <person name="Jeong H."/>
            <person name="Park J."/>
            <person name="Lee C."/>
        </authorList>
    </citation>
    <scope>X-RAY CRYSTALLOGRAPHY (3.11 ANGSTROMS) IN COMPLEX WITH PHOSPHOLIPID</scope>
</reference>
<reference key="15">
    <citation type="journal article" date="2017" name="Biochem. Biophys. Res. Commun.">
        <title>Crystal structure of Mdm12 and combinatorial reconstitution of Mdm12/Mmm1 ERMES complexes for structural studies.</title>
        <authorList>
            <person name="AhYoung A.P."/>
            <person name="Lu B."/>
            <person name="Cascio D."/>
            <person name="Egea P.F."/>
        </authorList>
    </citation>
    <scope>X-RAY CRYSTALLOGRAPHY (4.10 ANGSTROMS)</scope>
    <scope>SUBUNIT</scope>
</reference>
<reference key="16">
    <citation type="journal article" date="2017" name="Proc. Natl. Acad. Sci. U.S.A.">
        <title>Crystal structures of Mmm1 and Mdm12-Mmm1 reveal mechanistic insight into phospholipid trafficking at ER-mitochondria contact sites.</title>
        <authorList>
            <person name="Jeong H."/>
            <person name="Park J."/>
            <person name="Jun Y."/>
            <person name="Lee C."/>
        </authorList>
    </citation>
    <scope>X-RAY CRYSTALLOGRAPHY (3.80 ANGSTROMS) OF 212-271</scope>
</reference>
<evidence type="ECO:0000255" key="1">
    <source>
        <dbReference type="HAMAP-Rule" id="MF_03104"/>
    </source>
</evidence>
<evidence type="ECO:0000269" key="2">
    <source>
    </source>
</evidence>
<evidence type="ECO:0000269" key="3">
    <source>
    </source>
</evidence>
<evidence type="ECO:0000269" key="4">
    <source>
    </source>
</evidence>
<evidence type="ECO:0000269" key="5">
    <source>
    </source>
</evidence>
<evidence type="ECO:0000269" key="6">
    <source>
    </source>
</evidence>
<evidence type="ECO:0000269" key="7">
    <source>
    </source>
</evidence>
<evidence type="ECO:0000269" key="8">
    <source>
    </source>
</evidence>
<evidence type="ECO:0000269" key="9">
    <source>
    </source>
</evidence>
<evidence type="ECO:0000269" key="10">
    <source>
    </source>
</evidence>
<evidence type="ECO:0000269" key="11">
    <source>
    </source>
</evidence>
<evidence type="ECO:0000305" key="12"/>
<evidence type="ECO:0007744" key="13">
    <source>
    </source>
</evidence>
<evidence type="ECO:0007829" key="14">
    <source>
        <dbReference type="PDB" id="5GYD"/>
    </source>
</evidence>
<sequence>MSFDINWSTLESDNRLNDLIRKHLNSYLQNTQLPSYVSNLRVLDFDLGKVGPAITLKEITDPLDEFYDSIREEADQETEENNDNKEDSEHICPDRTIANHEGPKDDFEAPVVMPSPNDIQFLLEVEYKGDLLVTIGADLVLNYPVEKFMTLPVKLSISDIGLHSLCIVACLSKQLFLSFLCDVSDPALDDNQTVLDPKGPILAATKPLERISIVRSMKIETEIGEQYQGQGSVLRSVGELEQFLFTIFKDFLRKELAWPSWINLDFNDGDE</sequence>
<organism>
    <name type="scientific">Saccharomyces cerevisiae (strain ATCC 204508 / S288c)</name>
    <name type="common">Baker's yeast</name>
    <dbReference type="NCBI Taxonomy" id="559292"/>
    <lineage>
        <taxon>Eukaryota</taxon>
        <taxon>Fungi</taxon>
        <taxon>Dikarya</taxon>
        <taxon>Ascomycota</taxon>
        <taxon>Saccharomycotina</taxon>
        <taxon>Saccharomycetes</taxon>
        <taxon>Saccharomycetales</taxon>
        <taxon>Saccharomycetaceae</taxon>
        <taxon>Saccharomyces</taxon>
    </lineage>
</organism>
<protein>
    <recommendedName>
        <fullName evidence="1">Mitochondrial distribution and morphology protein 12</fullName>
    </recommendedName>
    <alternativeName>
        <fullName evidence="1">Mitochondrial inheritance component MDM12</fullName>
    </alternativeName>
</protein>
<dbReference type="EMBL" id="U62252">
    <property type="protein sequence ID" value="AAB17867.1"/>
    <property type="molecule type" value="Genomic_DNA"/>
</dbReference>
<dbReference type="EMBL" id="Z74751">
    <property type="protein sequence ID" value="CAA99008.1"/>
    <property type="molecule type" value="Genomic_DNA"/>
</dbReference>
<dbReference type="EMBL" id="AY558013">
    <property type="protein sequence ID" value="AAS56339.1"/>
    <property type="molecule type" value="Genomic_DNA"/>
</dbReference>
<dbReference type="EMBL" id="BK006948">
    <property type="protein sequence ID" value="DAA10774.1"/>
    <property type="molecule type" value="Genomic_DNA"/>
</dbReference>
<dbReference type="PIR" id="S66691">
    <property type="entry name" value="S66691"/>
</dbReference>
<dbReference type="RefSeq" id="NP_014634.1">
    <property type="nucleotide sequence ID" value="NM_001183263.1"/>
</dbReference>
<dbReference type="PDB" id="5GYD">
    <property type="method" value="X-ray"/>
    <property type="resolution" value="3.11 A"/>
    <property type="chains" value="A/B/C/D=1-271"/>
</dbReference>
<dbReference type="PDB" id="5GYK">
    <property type="method" value="X-ray"/>
    <property type="resolution" value="3.60 A"/>
    <property type="chains" value="A/B/C/D/E/F=1-73, A/B/C/D/E/F=115-271"/>
</dbReference>
<dbReference type="PDB" id="5VKZ">
    <property type="method" value="X-ray"/>
    <property type="resolution" value="4.10 A"/>
    <property type="chains" value="A/B=1-271"/>
</dbReference>
<dbReference type="PDB" id="5YK7">
    <property type="method" value="X-ray"/>
    <property type="resolution" value="3.80 A"/>
    <property type="chains" value="B/D=1-73, B/D=115-182, B/D=212-271"/>
</dbReference>
<dbReference type="PDBsum" id="5GYD"/>
<dbReference type="PDBsum" id="5GYK"/>
<dbReference type="PDBsum" id="5VKZ"/>
<dbReference type="PDBsum" id="5YK7"/>
<dbReference type="SMR" id="Q92328"/>
<dbReference type="BioGRID" id="34395">
    <property type="interactions" value="406"/>
</dbReference>
<dbReference type="ComplexPortal" id="CPX-3196">
    <property type="entry name" value="ERMES complex"/>
</dbReference>
<dbReference type="DIP" id="DIP-4188N"/>
<dbReference type="FunCoup" id="Q92328">
    <property type="interactions" value="86"/>
</dbReference>
<dbReference type="IntAct" id="Q92328">
    <property type="interactions" value="4"/>
</dbReference>
<dbReference type="MINT" id="Q92328"/>
<dbReference type="STRING" id="4932.YOL009C"/>
<dbReference type="TCDB" id="9.A.58.1.1">
    <property type="family name" value="the maintenance of mitochondrial morphology (mmm) family"/>
</dbReference>
<dbReference type="iPTMnet" id="Q92328"/>
<dbReference type="PaxDb" id="4932-YOL009C"/>
<dbReference type="PeptideAtlas" id="Q92328"/>
<dbReference type="EnsemblFungi" id="YOL009C_mRNA">
    <property type="protein sequence ID" value="YOL009C"/>
    <property type="gene ID" value="YOL009C"/>
</dbReference>
<dbReference type="GeneID" id="854153"/>
<dbReference type="KEGG" id="sce:YOL009C"/>
<dbReference type="AGR" id="SGD:S000005369"/>
<dbReference type="SGD" id="S000005369">
    <property type="gene designation" value="MDM12"/>
</dbReference>
<dbReference type="VEuPathDB" id="FungiDB:YOL009C"/>
<dbReference type="eggNOG" id="ENOG502QQS2">
    <property type="taxonomic scope" value="Eukaryota"/>
</dbReference>
<dbReference type="HOGENOM" id="CLU_026794_2_0_1"/>
<dbReference type="InParanoid" id="Q92328"/>
<dbReference type="OMA" id="AAWPSWI"/>
<dbReference type="OrthoDB" id="3356905at2759"/>
<dbReference type="BioCyc" id="YEAST:G3O-33426-MONOMER"/>
<dbReference type="BioGRID-ORCS" id="854153">
    <property type="hits" value="6 hits in 10 CRISPR screens"/>
</dbReference>
<dbReference type="PRO" id="PR:Q92328"/>
<dbReference type="Proteomes" id="UP000002311">
    <property type="component" value="Chromosome XV"/>
</dbReference>
<dbReference type="RNAct" id="Q92328">
    <property type="molecule type" value="protein"/>
</dbReference>
<dbReference type="GO" id="GO:0005737">
    <property type="term" value="C:cytoplasm"/>
    <property type="evidence" value="ECO:0007005"/>
    <property type="project" value="SGD"/>
</dbReference>
<dbReference type="GO" id="GO:0005789">
    <property type="term" value="C:endoplasmic reticulum membrane"/>
    <property type="evidence" value="ECO:0007669"/>
    <property type="project" value="UniProtKB-SubCell"/>
</dbReference>
<dbReference type="GO" id="GO:0032865">
    <property type="term" value="C:ERMES complex"/>
    <property type="evidence" value="ECO:0000353"/>
    <property type="project" value="SGD"/>
</dbReference>
<dbReference type="GO" id="GO:0044233">
    <property type="term" value="C:mitochondria-associated endoplasmic reticulum membrane contact site"/>
    <property type="evidence" value="ECO:0000314"/>
    <property type="project" value="SGD"/>
</dbReference>
<dbReference type="GO" id="GO:0005741">
    <property type="term" value="C:mitochondrial outer membrane"/>
    <property type="evidence" value="ECO:0000314"/>
    <property type="project" value="SGD"/>
</dbReference>
<dbReference type="GO" id="GO:0005739">
    <property type="term" value="C:mitochondrion"/>
    <property type="evidence" value="ECO:0007005"/>
    <property type="project" value="SGD"/>
</dbReference>
<dbReference type="GO" id="GO:0005634">
    <property type="term" value="C:nucleus"/>
    <property type="evidence" value="ECO:0007005"/>
    <property type="project" value="SGD"/>
</dbReference>
<dbReference type="GO" id="GO:0098799">
    <property type="term" value="C:outer mitochondrial membrane protein complex"/>
    <property type="evidence" value="ECO:0000303"/>
    <property type="project" value="ComplexPortal"/>
</dbReference>
<dbReference type="GO" id="GO:0005886">
    <property type="term" value="C:plasma membrane"/>
    <property type="evidence" value="ECO:0007005"/>
    <property type="project" value="SGD"/>
</dbReference>
<dbReference type="GO" id="GO:0008289">
    <property type="term" value="F:lipid binding"/>
    <property type="evidence" value="ECO:0007669"/>
    <property type="project" value="UniProtKB-KW"/>
</dbReference>
<dbReference type="GO" id="GO:0120013">
    <property type="term" value="F:lipid transfer activity"/>
    <property type="evidence" value="ECO:0000314"/>
    <property type="project" value="SGD"/>
</dbReference>
<dbReference type="GO" id="GO:0015917">
    <property type="term" value="P:aminophospholipid transport"/>
    <property type="evidence" value="ECO:0000315"/>
    <property type="project" value="SGD"/>
</dbReference>
<dbReference type="GO" id="GO:0000002">
    <property type="term" value="P:mitochondrial genome maintenance"/>
    <property type="evidence" value="ECO:0007669"/>
    <property type="project" value="UniProtKB-UniRule"/>
</dbReference>
<dbReference type="GO" id="GO:0070096">
    <property type="term" value="P:mitochondrial outer membrane translocase complex assembly"/>
    <property type="evidence" value="ECO:0000315"/>
    <property type="project" value="SGD"/>
</dbReference>
<dbReference type="GO" id="GO:0000001">
    <property type="term" value="P:mitochondrion inheritance"/>
    <property type="evidence" value="ECO:0000315"/>
    <property type="project" value="SGD"/>
</dbReference>
<dbReference type="GO" id="GO:0007005">
    <property type="term" value="P:mitochondrion organization"/>
    <property type="evidence" value="ECO:0000303"/>
    <property type="project" value="ComplexPortal"/>
</dbReference>
<dbReference type="GO" id="GO:1990456">
    <property type="term" value="P:mitochondrion-endoplasmic reticulum membrane tethering"/>
    <property type="evidence" value="ECO:0000315"/>
    <property type="project" value="SGD"/>
</dbReference>
<dbReference type="GO" id="GO:0007031">
    <property type="term" value="P:peroxisome organization"/>
    <property type="evidence" value="ECO:0000315"/>
    <property type="project" value="SGD"/>
</dbReference>
<dbReference type="GO" id="GO:0055091">
    <property type="term" value="P:phospholipid homeostasis"/>
    <property type="evidence" value="ECO:0000303"/>
    <property type="project" value="ComplexPortal"/>
</dbReference>
<dbReference type="GO" id="GO:0015914">
    <property type="term" value="P:phospholipid transport"/>
    <property type="evidence" value="ECO:0000316"/>
    <property type="project" value="SGD"/>
</dbReference>
<dbReference type="GO" id="GO:0045040">
    <property type="term" value="P:protein insertion into mitochondrial outer membrane"/>
    <property type="evidence" value="ECO:0007669"/>
    <property type="project" value="UniProtKB-UniRule"/>
</dbReference>
<dbReference type="CDD" id="cd21672">
    <property type="entry name" value="SMP_Mdm12"/>
    <property type="match status" value="1"/>
</dbReference>
<dbReference type="HAMAP" id="MF_03104">
    <property type="entry name" value="Mdm12"/>
    <property type="match status" value="1"/>
</dbReference>
<dbReference type="InterPro" id="IPR027532">
    <property type="entry name" value="Mdm12"/>
</dbReference>
<dbReference type="InterPro" id="IPR031468">
    <property type="entry name" value="SMP_LBD"/>
</dbReference>
<dbReference type="PANTHER" id="PTHR28204">
    <property type="entry name" value="MITOCHONDRIAL DISTRIBUTION AND MORPHOLOGY PROTEIN 12"/>
    <property type="match status" value="1"/>
</dbReference>
<dbReference type="PANTHER" id="PTHR28204:SF1">
    <property type="entry name" value="MITOCHONDRIAL DISTRIBUTION AND MORPHOLOGY PROTEIN 12"/>
    <property type="match status" value="1"/>
</dbReference>
<dbReference type="PROSITE" id="PS51847">
    <property type="entry name" value="SMP"/>
    <property type="match status" value="1"/>
</dbReference>
<feature type="chain" id="PRO_0000096329" description="Mitochondrial distribution and morphology protein 12">
    <location>
        <begin position="1"/>
        <end position="271"/>
    </location>
</feature>
<feature type="domain" description="SMP-LTD" evidence="1">
    <location>
        <begin position="1"/>
        <end position="267"/>
    </location>
</feature>
<feature type="cross-link" description="Glycyl lysine isopeptide (Lys-Gly) (interchain with G-Cter in ubiquitin)" evidence="13">
    <location>
        <position position="49"/>
    </location>
</feature>
<feature type="mutagenesis site" description="Does not affect function; when associated with A-12; E-17 and D-22." evidence="7">
    <original>E</original>
    <variation>R</variation>
    <location>
        <position position="11"/>
    </location>
</feature>
<feature type="mutagenesis site" description="Does not affect function; when associated with R-11; E-17 and D-22." evidence="7">
    <original>S</original>
    <variation>A</variation>
    <location>
        <position position="12"/>
    </location>
</feature>
<feature type="mutagenesis site" description="Does not affect function; when associated with D-19 and D-20." evidence="7">
    <original>L</original>
    <variation>D</variation>
    <location>
        <position position="16"/>
    </location>
</feature>
<feature type="mutagenesis site" description="Does not affect function; when associated with R-11; A-12 and D-22." evidence="7">
    <original>N</original>
    <variation>E</variation>
    <location>
        <position position="17"/>
    </location>
</feature>
<feature type="mutagenesis site" description="Does not affect function; when associated with D-16 and D-20." evidence="7">
    <original>L</original>
    <variation>D</variation>
    <location>
        <position position="19"/>
    </location>
</feature>
<feature type="mutagenesis site" description="Does not affect function; when associated with D-16 and D-19." evidence="7">
    <original>I</original>
    <variation>D</variation>
    <location>
        <position position="20"/>
    </location>
</feature>
<feature type="mutagenesis site" description="Does not affect function; when associated with R-11; A-12 and E-17." evidence="7">
    <original>K</original>
    <variation>D</variation>
    <location>
        <position position="22"/>
    </location>
</feature>
<feature type="mutagenesis site" description="Does not affect function." evidence="7">
    <original>P</original>
    <variation>A</variation>
    <location>
        <position position="259"/>
    </location>
</feature>
<feature type="sequence conflict" description="In Ref. 1; AAB17867." evidence="12" ref="1">
    <original>I</original>
    <variation>V</variation>
    <location>
        <position position="91"/>
    </location>
</feature>
<feature type="sequence conflict" description="In Ref. 1; AAB17867." evidence="12" ref="1">
    <original>G</original>
    <variation>D</variation>
    <location>
        <position position="269"/>
    </location>
</feature>
<feature type="strand" evidence="14">
    <location>
        <begin position="1"/>
        <end position="6"/>
    </location>
</feature>
<feature type="helix" evidence="14">
    <location>
        <begin position="8"/>
        <end position="11"/>
    </location>
</feature>
<feature type="helix" evidence="14">
    <location>
        <begin position="16"/>
        <end position="29"/>
    </location>
</feature>
<feature type="strand" evidence="14">
    <location>
        <begin position="37"/>
        <end position="46"/>
    </location>
</feature>
<feature type="strand" evidence="14">
    <location>
        <begin position="49"/>
        <end position="60"/>
    </location>
</feature>
<feature type="helix" evidence="14">
    <location>
        <begin position="64"/>
        <end position="72"/>
    </location>
</feature>
<feature type="strand" evidence="14">
    <location>
        <begin position="119"/>
        <end position="128"/>
    </location>
</feature>
<feature type="strand" evidence="14">
    <location>
        <begin position="132"/>
        <end position="141"/>
    </location>
</feature>
<feature type="strand" evidence="14">
    <location>
        <begin position="143"/>
        <end position="147"/>
    </location>
</feature>
<feature type="strand" evidence="14">
    <location>
        <begin position="149"/>
        <end position="171"/>
    </location>
</feature>
<feature type="strand" evidence="14">
    <location>
        <begin position="174"/>
        <end position="182"/>
    </location>
</feature>
<feature type="helix" evidence="14">
    <location>
        <begin position="186"/>
        <end position="188"/>
    </location>
</feature>
<feature type="helix" evidence="14">
    <location>
        <begin position="200"/>
        <end position="203"/>
    </location>
</feature>
<feature type="helix" evidence="14">
    <location>
        <begin position="207"/>
        <end position="209"/>
    </location>
</feature>
<feature type="strand" evidence="14">
    <location>
        <begin position="213"/>
        <end position="222"/>
    </location>
</feature>
<feature type="helix" evidence="14">
    <location>
        <begin position="225"/>
        <end position="227"/>
    </location>
</feature>
<feature type="helix" evidence="14">
    <location>
        <begin position="231"/>
        <end position="256"/>
    </location>
</feature>
<feature type="strand" evidence="14">
    <location>
        <begin position="262"/>
        <end position="264"/>
    </location>
</feature>
<accession>Q92328</accession>
<accession>D6W258</accession>
<accession>Q08064</accession>
<keyword id="KW-0002">3D-structure</keyword>
<keyword id="KW-0256">Endoplasmic reticulum</keyword>
<keyword id="KW-1017">Isopeptide bond</keyword>
<keyword id="KW-0445">Lipid transport</keyword>
<keyword id="KW-0446">Lipid-binding</keyword>
<keyword id="KW-0472">Membrane</keyword>
<keyword id="KW-0496">Mitochondrion</keyword>
<keyword id="KW-1000">Mitochondrion outer membrane</keyword>
<keyword id="KW-1185">Reference proteome</keyword>
<keyword id="KW-0813">Transport</keyword>
<keyword id="KW-0832">Ubl conjugation</keyword>
<name>MDM12_YEAST</name>
<gene>
    <name evidence="1" type="primary">MDM12</name>
    <name type="ordered locus">YOL009C</name>
</gene>
<comment type="function">
    <text evidence="1 5 6 8">Component of the ERMES/MDM complex, which serves as a molecular tether to connect the endoplasmic reticulum and mitochondria (PubMed:19556461, PubMed:22250200). Components of this complex are involved in the control of mitochondrial shape and protein biogenesis, and function in nonvesicular lipid trafficking between the ER and mitochondria (PubMed:19556461, PubMed:27469264). MDM12 is required for the interaction of the ER-resident membrane protein MMM1 and the outer mitochondrial membrane-resident beta-barrel protein MDM10. The MDM12-MMM1 subcomplex functions in the major beta-barrel assembly pathway that is responsible for biogenesis of all mitochondrial outer membrane beta-barrel proteins, and acts in a late step after the SAM complex. The MDM10-MDM12-MMM1 subcomplex further acts in the TOM40-specific pathway after the action of the MDM12-MMM1 complex. Essential for establishing and maintaining the structure of mitochondria and maintenance of mtDNA nucleoids (By similarity) (PubMed:17410204).</text>
</comment>
<comment type="subunit">
    <text evidence="1 2 4 5 6 10 11">Component of the ER-mitochondria encounter structure (ERMES) or MDM complex, composed of MMM1, MDM10, MDM12 and MDM34 (PubMed:13679517, PubMed:17410204, PubMed:19556461). A MMM1 homodimer associates with one molecule of MDM12 on each side in a pairwise head-to-tail manner, and the SMP-LTD domains of MMM1 and MDM12 generate a continuous hydrophobic tunnel for phospholipid trafficking (PubMed:28479252, PubMed:29078410). Interacts with PUF3 (By similarity) (PubMed:17210948).</text>
</comment>
<comment type="interaction">
    <interactant intactId="EBI-10584">
        <id>Q92328</id>
    </interactant>
    <interactant intactId="EBI-10580">
        <id>P18409</id>
        <label>MDM10</label>
    </interactant>
    <organismsDiffer>false</organismsDiffer>
    <experiments>4</experiments>
</comment>
<comment type="interaction">
    <interactant intactId="EBI-10584">
        <id>Q92328</id>
    </interactant>
    <interactant intactId="EBI-11029">
        <id>P41800</id>
        <label>MMM1</label>
    </interactant>
    <organismsDiffer>false</organismsDiffer>
    <experiments>5</experiments>
</comment>
<comment type="subcellular location">
    <subcellularLocation>
        <location evidence="1">Mitochondrion outer membrane</location>
        <topology evidence="1">Peripheral membrane protein</topology>
        <orientation evidence="1">Cytoplasmic side</orientation>
    </subcellularLocation>
    <subcellularLocation>
        <location evidence="1">Endoplasmic reticulum membrane</location>
        <topology evidence="1">Peripheral membrane protein</topology>
        <orientation evidence="1">Cytoplasmic side</orientation>
    </subcellularLocation>
    <text evidence="1">The ERMES/MDM complex localizes to a few discrete foci (around 10 per single cell), that represent mitochondria-endoplasmic reticulum junctions. These foci are often found next to mtDNA nucleoids.</text>
</comment>
<comment type="domain">
    <text evidence="1 7 9">The SMP-LTD domain is a barrel-like domain that can bind various types of glycerophospholipids in its interior and mediate their transfer between two adjacent bilayers.</text>
</comment>
<comment type="miscellaneous">
    <text evidence="3">Present with 1070 molecules/cell in log phase SD medium.</text>
</comment>
<comment type="similarity">
    <text evidence="1">Belongs to the MDM12 family.</text>
</comment>
<proteinExistence type="evidence at protein level"/>